<name>RL19_PELUB</name>
<dbReference type="EMBL" id="CP000084">
    <property type="protein sequence ID" value="AAZ21075.1"/>
    <property type="molecule type" value="Genomic_DNA"/>
</dbReference>
<dbReference type="RefSeq" id="WP_011281573.1">
    <property type="nucleotide sequence ID" value="NC_007205.1"/>
</dbReference>
<dbReference type="SMR" id="Q4FP14"/>
<dbReference type="STRING" id="335992.SAR11_0253"/>
<dbReference type="GeneID" id="66294751"/>
<dbReference type="KEGG" id="pub:SAR11_0253"/>
<dbReference type="eggNOG" id="COG0335">
    <property type="taxonomic scope" value="Bacteria"/>
</dbReference>
<dbReference type="HOGENOM" id="CLU_103507_0_0_5"/>
<dbReference type="OrthoDB" id="9803541at2"/>
<dbReference type="Proteomes" id="UP000002528">
    <property type="component" value="Chromosome"/>
</dbReference>
<dbReference type="GO" id="GO:0022625">
    <property type="term" value="C:cytosolic large ribosomal subunit"/>
    <property type="evidence" value="ECO:0007669"/>
    <property type="project" value="TreeGrafter"/>
</dbReference>
<dbReference type="GO" id="GO:0003735">
    <property type="term" value="F:structural constituent of ribosome"/>
    <property type="evidence" value="ECO:0007669"/>
    <property type="project" value="InterPro"/>
</dbReference>
<dbReference type="GO" id="GO:0006412">
    <property type="term" value="P:translation"/>
    <property type="evidence" value="ECO:0007669"/>
    <property type="project" value="UniProtKB-UniRule"/>
</dbReference>
<dbReference type="FunFam" id="2.30.30.790:FF:000001">
    <property type="entry name" value="50S ribosomal protein L19"/>
    <property type="match status" value="1"/>
</dbReference>
<dbReference type="Gene3D" id="2.30.30.790">
    <property type="match status" value="1"/>
</dbReference>
<dbReference type="HAMAP" id="MF_00402">
    <property type="entry name" value="Ribosomal_bL19"/>
    <property type="match status" value="1"/>
</dbReference>
<dbReference type="InterPro" id="IPR001857">
    <property type="entry name" value="Ribosomal_bL19"/>
</dbReference>
<dbReference type="InterPro" id="IPR018257">
    <property type="entry name" value="Ribosomal_bL19_CS"/>
</dbReference>
<dbReference type="InterPro" id="IPR038657">
    <property type="entry name" value="Ribosomal_bL19_sf"/>
</dbReference>
<dbReference type="InterPro" id="IPR008991">
    <property type="entry name" value="Translation_prot_SH3-like_sf"/>
</dbReference>
<dbReference type="NCBIfam" id="TIGR01024">
    <property type="entry name" value="rplS_bact"/>
    <property type="match status" value="1"/>
</dbReference>
<dbReference type="PANTHER" id="PTHR15680:SF9">
    <property type="entry name" value="LARGE RIBOSOMAL SUBUNIT PROTEIN BL19M"/>
    <property type="match status" value="1"/>
</dbReference>
<dbReference type="PANTHER" id="PTHR15680">
    <property type="entry name" value="RIBOSOMAL PROTEIN L19"/>
    <property type="match status" value="1"/>
</dbReference>
<dbReference type="Pfam" id="PF01245">
    <property type="entry name" value="Ribosomal_L19"/>
    <property type="match status" value="1"/>
</dbReference>
<dbReference type="PRINTS" id="PR00061">
    <property type="entry name" value="RIBOSOMALL19"/>
</dbReference>
<dbReference type="SUPFAM" id="SSF50104">
    <property type="entry name" value="Translation proteins SH3-like domain"/>
    <property type="match status" value="1"/>
</dbReference>
<dbReference type="PROSITE" id="PS01015">
    <property type="entry name" value="RIBOSOMAL_L19"/>
    <property type="match status" value="1"/>
</dbReference>
<reference key="1">
    <citation type="journal article" date="2005" name="Science">
        <title>Genome streamlining in a cosmopolitan oceanic bacterium.</title>
        <authorList>
            <person name="Giovannoni S.J."/>
            <person name="Tripp H.J."/>
            <person name="Givan S."/>
            <person name="Podar M."/>
            <person name="Vergin K.L."/>
            <person name="Baptista D."/>
            <person name="Bibbs L."/>
            <person name="Eads J."/>
            <person name="Richardson T.H."/>
            <person name="Noordewier M."/>
            <person name="Rappe M.S."/>
            <person name="Short J.M."/>
            <person name="Carrington J.C."/>
            <person name="Mathur E.J."/>
        </authorList>
    </citation>
    <scope>NUCLEOTIDE SEQUENCE [LARGE SCALE GENOMIC DNA]</scope>
    <source>
        <strain>HTCC1062</strain>
    </source>
</reference>
<comment type="function">
    <text evidence="1">This protein is located at the 30S-50S ribosomal subunit interface and may play a role in the structure and function of the aminoacyl-tRNA binding site.</text>
</comment>
<comment type="similarity">
    <text evidence="1">Belongs to the bacterial ribosomal protein bL19 family.</text>
</comment>
<proteinExistence type="inferred from homology"/>
<feature type="chain" id="PRO_0000226859" description="Large ribosomal subunit protein bL19">
    <location>
        <begin position="1"/>
        <end position="164"/>
    </location>
</feature>
<feature type="region of interest" description="Disordered" evidence="2">
    <location>
        <begin position="144"/>
        <end position="164"/>
    </location>
</feature>
<keyword id="KW-1185">Reference proteome</keyword>
<keyword id="KW-0687">Ribonucleoprotein</keyword>
<keyword id="KW-0689">Ribosomal protein</keyword>
<accession>Q4FP14</accession>
<sequence>MKTIEEINQLNVKKILSEKKIPDFFPGDVIKVGVRITEGKKDRIQYFEGVCIARKNRDINSSFTVRKISFGEGVERTFPLYGTVIDTITVIRHGKVRRAKLYYLRDRTGKSARIAEKIRKKIGIEVDVKPEMVTEETLAPVAAEAEKQTEVQAEPKIEKSEEKK</sequence>
<evidence type="ECO:0000255" key="1">
    <source>
        <dbReference type="HAMAP-Rule" id="MF_00402"/>
    </source>
</evidence>
<evidence type="ECO:0000256" key="2">
    <source>
        <dbReference type="SAM" id="MobiDB-lite"/>
    </source>
</evidence>
<evidence type="ECO:0000305" key="3"/>
<protein>
    <recommendedName>
        <fullName evidence="1">Large ribosomal subunit protein bL19</fullName>
    </recommendedName>
    <alternativeName>
        <fullName evidence="3">50S ribosomal protein L19</fullName>
    </alternativeName>
</protein>
<gene>
    <name evidence="1" type="primary">rplS</name>
    <name type="ordered locus">SAR11_0253</name>
</gene>
<organism>
    <name type="scientific">Pelagibacter ubique (strain HTCC1062)</name>
    <dbReference type="NCBI Taxonomy" id="335992"/>
    <lineage>
        <taxon>Bacteria</taxon>
        <taxon>Pseudomonadati</taxon>
        <taxon>Pseudomonadota</taxon>
        <taxon>Alphaproteobacteria</taxon>
        <taxon>Candidatus Pelagibacterales</taxon>
        <taxon>Candidatus Pelagibacteraceae</taxon>
        <taxon>Candidatus Pelagibacter</taxon>
    </lineage>
</organism>